<accession>Q2FWI8</accession>
<accession>O05341</accession>
<gene>
    <name type="primary">mazF</name>
    <name type="ordered locus">SAOUHSC_02303</name>
</gene>
<name>MAZF_STAA8</name>
<reference key="1">
    <citation type="journal article" date="1997" name="Arch. Microbiol.">
        <title>The alternative sigma factor sigmaB in Staphylococcus aureus: regulation of the sigB operon in response to growth phase and heat shock.</title>
        <authorList>
            <person name="Kullik I."/>
            <person name="Giachino P."/>
        </authorList>
    </citation>
    <scope>NUCLEOTIDE SEQUENCE [GENOMIC DNA]</scope>
</reference>
<reference key="2">
    <citation type="book" date="2006" name="Gram positive pathogens, 2nd edition">
        <title>The Staphylococcus aureus NCTC 8325 genome.</title>
        <editorList>
            <person name="Fischetti V."/>
            <person name="Novick R."/>
            <person name="Ferretti J."/>
            <person name="Portnoy D."/>
            <person name="Rood J."/>
        </editorList>
        <authorList>
            <person name="Gillaspy A.F."/>
            <person name="Worrell V."/>
            <person name="Orvis J."/>
            <person name="Roe B.A."/>
            <person name="Dyer D.W."/>
            <person name="Iandolo J.J."/>
        </authorList>
    </citation>
    <scope>NUCLEOTIDE SEQUENCE [LARGE SCALE GENOMIC DNA]</scope>
    <source>
        <strain>NCTC 8325 / PS 47</strain>
    </source>
</reference>
<proteinExistence type="evidence at protein level"/>
<comment type="function">
    <text evidence="1">Toxic component of a type II toxin-antitoxin (TA) system. Ribosome-independent, sequence-specific endoribonuclease that cleaves mRNA, thus inhibiting protein synthesis and inducing bacterial stasis. It cuts between the first and nucleotides of 5'-UACAU-3' in single-stranded RNA. Neutralized by coexpression with cognate antitoxin MazE.</text>
</comment>
<comment type="subunit">
    <text evidence="1">Forms a complex with MazE which is no longer active as an endoribonuclease.</text>
</comment>
<comment type="similarity">
    <text evidence="2">Belongs to the PemK/MazF family.</text>
</comment>
<protein>
    <recommendedName>
        <fullName>Endoribonuclease MazF</fullName>
        <ecNumber>3.1.-.-</ecNumber>
    </recommendedName>
    <alternativeName>
        <fullName>Toxin MazF</fullName>
    </alternativeName>
    <alternativeName>
        <fullName>mRNA interferase MazF</fullName>
    </alternativeName>
</protein>
<feature type="chain" id="PRO_0000330702" description="Endoribonuclease MazF">
    <location>
        <begin position="1"/>
        <end position="120"/>
    </location>
</feature>
<feature type="strand" evidence="3">
    <location>
        <begin position="6"/>
        <end position="11"/>
    </location>
</feature>
<feature type="strand" evidence="3">
    <location>
        <begin position="22"/>
        <end position="28"/>
    </location>
</feature>
<feature type="helix" evidence="3">
    <location>
        <begin position="32"/>
        <end position="37"/>
    </location>
</feature>
<feature type="strand" evidence="3">
    <location>
        <begin position="39"/>
        <end position="47"/>
    </location>
</feature>
<feature type="strand" evidence="3">
    <location>
        <begin position="58"/>
        <end position="61"/>
    </location>
</feature>
<feature type="turn" evidence="3">
    <location>
        <begin position="63"/>
        <end position="67"/>
    </location>
</feature>
<feature type="strand" evidence="3">
    <location>
        <begin position="72"/>
        <end position="83"/>
    </location>
</feature>
<feature type="helix" evidence="3">
    <location>
        <begin position="84"/>
        <end position="86"/>
    </location>
</feature>
<feature type="strand" evidence="3">
    <location>
        <begin position="87"/>
        <end position="93"/>
    </location>
</feature>
<feature type="helix" evidence="3">
    <location>
        <begin position="96"/>
        <end position="109"/>
    </location>
</feature>
<evidence type="ECO:0000250" key="1">
    <source>
        <dbReference type="UniProtKB" id="A6QIR4"/>
    </source>
</evidence>
<evidence type="ECO:0000305" key="2"/>
<evidence type="ECO:0007829" key="3">
    <source>
        <dbReference type="PDB" id="5DLO"/>
    </source>
</evidence>
<dbReference type="EC" id="3.1.-.-"/>
<dbReference type="EMBL" id="Y07645">
    <property type="protein sequence ID" value="CAA68928.1"/>
    <property type="molecule type" value="Genomic_DNA"/>
</dbReference>
<dbReference type="EMBL" id="CP000253">
    <property type="protein sequence ID" value="ABD31337.1"/>
    <property type="molecule type" value="Genomic_DNA"/>
</dbReference>
<dbReference type="RefSeq" id="WP_000621175.1">
    <property type="nucleotide sequence ID" value="NZ_LS483365.1"/>
</dbReference>
<dbReference type="RefSeq" id="YP_500782.1">
    <property type="nucleotide sequence ID" value="NC_007795.1"/>
</dbReference>
<dbReference type="PDB" id="5DLO">
    <property type="method" value="X-ray"/>
    <property type="resolution" value="1.40 A"/>
    <property type="chains" value="A=2-120"/>
</dbReference>
<dbReference type="PDBsum" id="5DLO"/>
<dbReference type="BMRB" id="Q2FWI8"/>
<dbReference type="SMR" id="Q2FWI8"/>
<dbReference type="STRING" id="93061.SAOUHSC_02303"/>
<dbReference type="PaxDb" id="1280-SAXN108_2313"/>
<dbReference type="GeneID" id="3919174"/>
<dbReference type="KEGG" id="sao:SAOUHSC_02303"/>
<dbReference type="PATRIC" id="fig|93061.5.peg.2087"/>
<dbReference type="eggNOG" id="COG2337">
    <property type="taxonomic scope" value="Bacteria"/>
</dbReference>
<dbReference type="HOGENOM" id="CLU_121823_1_0_9"/>
<dbReference type="OrthoDB" id="9808744at2"/>
<dbReference type="EvolutionaryTrace" id="Q2FWI8"/>
<dbReference type="PRO" id="PR:Q2FWI8"/>
<dbReference type="Proteomes" id="UP000008816">
    <property type="component" value="Chromosome"/>
</dbReference>
<dbReference type="GO" id="GO:0003677">
    <property type="term" value="F:DNA binding"/>
    <property type="evidence" value="ECO:0007669"/>
    <property type="project" value="InterPro"/>
</dbReference>
<dbReference type="GO" id="GO:0003723">
    <property type="term" value="F:RNA binding"/>
    <property type="evidence" value="ECO:0007669"/>
    <property type="project" value="UniProtKB-KW"/>
</dbReference>
<dbReference type="GO" id="GO:0004521">
    <property type="term" value="F:RNA endonuclease activity"/>
    <property type="evidence" value="ECO:0000318"/>
    <property type="project" value="GO_Central"/>
</dbReference>
<dbReference type="GO" id="GO:0006402">
    <property type="term" value="P:mRNA catabolic process"/>
    <property type="evidence" value="ECO:0000318"/>
    <property type="project" value="GO_Central"/>
</dbReference>
<dbReference type="GO" id="GO:0016075">
    <property type="term" value="P:rRNA catabolic process"/>
    <property type="evidence" value="ECO:0000318"/>
    <property type="project" value="GO_Central"/>
</dbReference>
<dbReference type="Gene3D" id="2.30.30.110">
    <property type="match status" value="1"/>
</dbReference>
<dbReference type="InterPro" id="IPR003477">
    <property type="entry name" value="PemK-like"/>
</dbReference>
<dbReference type="InterPro" id="IPR011067">
    <property type="entry name" value="Plasmid_toxin/cell-grow_inhib"/>
</dbReference>
<dbReference type="PANTHER" id="PTHR33988:SF2">
    <property type="entry name" value="ENDORIBONUCLEASE MAZF"/>
    <property type="match status" value="1"/>
</dbReference>
<dbReference type="PANTHER" id="PTHR33988">
    <property type="entry name" value="ENDORIBONUCLEASE MAZF-RELATED"/>
    <property type="match status" value="1"/>
</dbReference>
<dbReference type="Pfam" id="PF02452">
    <property type="entry name" value="PemK_toxin"/>
    <property type="match status" value="1"/>
</dbReference>
<dbReference type="PIRSF" id="PIRSF033490">
    <property type="entry name" value="MazF"/>
    <property type="match status" value="1"/>
</dbReference>
<dbReference type="SUPFAM" id="SSF50118">
    <property type="entry name" value="Cell growth inhibitor/plasmid maintenance toxic component"/>
    <property type="match status" value="1"/>
</dbReference>
<organism>
    <name type="scientific">Staphylococcus aureus (strain NCTC 8325 / PS 47)</name>
    <dbReference type="NCBI Taxonomy" id="93061"/>
    <lineage>
        <taxon>Bacteria</taxon>
        <taxon>Bacillati</taxon>
        <taxon>Bacillota</taxon>
        <taxon>Bacilli</taxon>
        <taxon>Bacillales</taxon>
        <taxon>Staphylococcaceae</taxon>
        <taxon>Staphylococcus</taxon>
    </lineage>
</organism>
<keyword id="KW-0002">3D-structure</keyword>
<keyword id="KW-0255">Endonuclease</keyword>
<keyword id="KW-0378">Hydrolase</keyword>
<keyword id="KW-0540">Nuclease</keyword>
<keyword id="KW-1185">Reference proteome</keyword>
<keyword id="KW-0694">RNA-binding</keyword>
<keyword id="KW-1277">Toxin-antitoxin system</keyword>
<sequence length="120" mass="13442">MIRRGDVYLADLSPVQGSEQGGVRPVVIIQNDTGNKYSPTVIVAAITGRINKAKIPTHVEIEKKKYKLDKDSVILLEQIRTLDKKRLKEKLTYLSDDKMKEVDNALMISLGLNAVAHQKN</sequence>